<reference key="1">
    <citation type="journal article" date="1983" name="Biochem. Biophys. Res. Commun.">
        <title>Cloning of interleukin 2 mRNAs from human tonsils.</title>
        <authorList>
            <person name="Maeda S."/>
            <person name="Nishino N."/>
            <person name="Obaru K."/>
            <person name="Mita S."/>
            <person name="Nomiyama H."/>
            <person name="Shimada K."/>
            <person name="Fujimoto K."/>
            <person name="Teranishi T."/>
            <person name="Hirano T."/>
            <person name="Onoue K."/>
        </authorList>
    </citation>
    <scope>NUCLEOTIDE SEQUENCE [GENOMIC DNA]</scope>
</reference>
<reference key="2">
    <citation type="journal article" date="1983" name="Nature">
        <title>Structure and expression of a cloned cDNA for human interleukin-2.</title>
        <authorList>
            <person name="Taniguchi T."/>
            <person name="Matsui H."/>
            <person name="Fujita T."/>
            <person name="Takaoka C."/>
            <person name="Kashima N."/>
            <person name="Yoshimoto R."/>
            <person name="Hamuro J."/>
        </authorList>
    </citation>
    <scope>NUCLEOTIDE SEQUENCE [GENOMIC DNA / MRNA]</scope>
</reference>
<reference key="3">
    <citation type="journal article" date="1983" name="Nucleic Acids Res.">
        <title>Molecular cloning of human interleukin 2 cDNA and its expression in E. coli.</title>
        <authorList>
            <person name="Devos R."/>
            <person name="Plaetinck G."/>
            <person name="Cheroutre H."/>
            <person name="Simons G."/>
            <person name="Degrave W."/>
            <person name="Tavernier J."/>
            <person name="Remaut E."/>
            <person name="Fiers W."/>
        </authorList>
    </citation>
    <scope>NUCLEOTIDE SEQUENCE [GENOMIC DNA]</scope>
</reference>
<reference key="4">
    <citation type="journal article" date="1983" name="Proc. Natl. Acad. Sci. U.S.A.">
        <title>Structure of the human interleukin 2 gene.</title>
        <authorList>
            <person name="Fujita T."/>
            <person name="Takaoka C."/>
            <person name="Matsui H."/>
            <person name="Taniguchi T."/>
        </authorList>
    </citation>
    <scope>NUCLEOTIDE SEQUENCE [GENOMIC DNA]</scope>
</reference>
<reference key="5">
    <citation type="journal article" date="1984" name="Nucleic Acids Res.">
        <title>DNA sequence of the 5' flanking region of the human interleukin 2 gene: homologies with adult T-cell leukemia virus.</title>
        <authorList>
            <person name="Holbrook N.J."/>
            <person name="Lieber M."/>
            <person name="Crabtree G.R."/>
        </authorList>
    </citation>
    <scope>NUCLEOTIDE SEQUENCE [GENOMIC DNA]</scope>
</reference>
<reference key="6">
    <citation type="journal article" date="1984" name="Proc. Natl. Acad. Sci. U.S.A.">
        <title>T-cell growth factor: complete nucleotide sequence and organization of the gene in normal and malignant cells.</title>
        <authorList>
            <person name="Holbrook N.J."/>
            <person name="Smith K.A."/>
            <person name="Fornace A.J. Jr."/>
            <person name="Comeau C.M."/>
            <person name="Wiskocil R.L."/>
            <person name="Crabtree G.R."/>
        </authorList>
    </citation>
    <scope>NUCLEOTIDE SEQUENCE [GENOMIC DNA]</scope>
    <scope>FUNCTION</scope>
</reference>
<reference key="7">
    <citation type="journal article" date="1995" name="J. Neurochem.">
        <title>Interleukin-2 transcripts in human and rodent brains: possible expression by astrocytes.</title>
        <authorList>
            <person name="Eizenberg O."/>
            <person name="Faber-Elman A."/>
            <person name="Lotan M."/>
            <person name="Schwartz M."/>
        </authorList>
    </citation>
    <scope>NUCLEOTIDE SEQUENCE [MRNA]</scope>
</reference>
<reference key="8">
    <citation type="journal article" date="1996" name="Mol. Reprod. Dev.">
        <title>Sequence of interleukin-2 isolated from human placental poly A+ RNA: possible role in maintenance of fetal allograft.</title>
        <authorList>
            <person name="Chernicky C.L."/>
            <person name="Tan H."/>
            <person name="Burfeind P."/>
            <person name="Ilan J."/>
            <person name="Ilan J."/>
        </authorList>
    </citation>
    <scope>NUCLEOTIDE SEQUENCE [MRNA]</scope>
    <source>
        <tissue>Placenta</tissue>
    </source>
</reference>
<reference key="9">
    <citation type="submission" date="2001-03" db="EMBL/GenBank/DDBJ databases">
        <authorList>
            <consortium name="SeattleSNPs variation discovery resource"/>
        </authorList>
    </citation>
    <scope>NUCLEOTIDE SEQUENCE [GENOMIC DNA]</scope>
</reference>
<reference key="10">
    <citation type="journal article" date="2004" name="Genome Res.">
        <title>The status, quality, and expansion of the NIH full-length cDNA project: the Mammalian Gene Collection (MGC).</title>
        <authorList>
            <consortium name="The MGC Project Team"/>
        </authorList>
    </citation>
    <scope>NUCLEOTIDE SEQUENCE [LARGE SCALE MRNA]</scope>
    <source>
        <tissue>Blood</tissue>
    </source>
</reference>
<reference key="11">
    <citation type="journal article" date="1985" name="Biomed. Res.">
        <title>Organization of the DNA regions flanking the human interleukin 2 gene.</title>
        <authorList>
            <person name="Nishino N."/>
            <person name="Obaru K."/>
            <person name="Maeda S."/>
            <person name="Shimada K."/>
            <person name="Onoue K."/>
        </authorList>
    </citation>
    <scope>NUCLEOTIDE SEQUENCE [GENOMIC DNA] OF 1-68</scope>
</reference>
<reference key="12">
    <citation type="journal article" date="1986" name="Mol. Cell. Biol.">
        <title>Promoter region of interleukin-2 gene undergoes chromatin structure changes and confers inducibility on chloramphenicol acetyltransferase gene during activation of T cells.</title>
        <authorList>
            <person name="Siebenlist U."/>
            <person name="Durand D.B."/>
            <person name="Bressler P."/>
            <person name="Holbrook N.J."/>
            <person name="Norris C.A."/>
            <person name="Kamoun M."/>
            <person name="Kant J.A."/>
            <person name="Crabtree G.R."/>
        </authorList>
    </citation>
    <scope>NUCLEOTIDE SEQUENCE [GENOMIC DNA] OF 1-69</scope>
</reference>
<reference key="13">
    <citation type="journal article" date="1988" name="Biochemistry">
        <title>Structure-activity relationships of recombinant human interleukin 2.</title>
        <authorList>
            <person name="Weir M.P."/>
            <person name="Chaplin M.A."/>
            <person name="Wallace D.M."/>
            <person name="Dykes C.W."/>
            <person name="Hobden A.N."/>
        </authorList>
    </citation>
    <scope>NUCLEOTIDE SEQUENCE [GENOMIC DNA] OF 21-153</scope>
</reference>
<reference key="14">
    <citation type="journal article" date="1984" name="Proc. Natl. Acad. Sci. U.S.A.">
        <title>Amino acid sequence and post-translational modification of human interleukin 2.</title>
        <authorList>
            <person name="Robb R.J."/>
            <person name="Kutny R.M."/>
            <person name="Panico M."/>
            <person name="Morris H.R."/>
            <person name="Chowdhry V."/>
        </authorList>
    </citation>
    <scope>PROTEIN SEQUENCE OF 21-153</scope>
    <scope>DISULFIDE BOND</scope>
    <scope>GLYCOSYLATION AT THR-23</scope>
</reference>
<reference key="15">
    <citation type="journal article" date="1984" name="Nature">
        <title>Human interleukin-2 promotes proliferation of activated B cells via surface receptors similar to those of activated T cells.</title>
        <authorList>
            <person name="Mingari M.C."/>
            <person name="Gerosa F."/>
            <person name="Carra G."/>
            <person name="Accolla R.S."/>
            <person name="Moretta A."/>
            <person name="Zubler R.H."/>
            <person name="Waldmann T.A."/>
            <person name="Moretta L."/>
        </authorList>
    </citation>
    <scope>FUNCTION</scope>
</reference>
<reference key="16">
    <citation type="journal article" date="1989" name="J. Biol. Chem.">
        <title>Expression of human interleukin-2 in recombinant baby hamster kidney, Ltk-, and Chinese hamster ovary cells. Structure of O-linked carbohydrate chains and their location within the polypeptide.</title>
        <authorList>
            <person name="Conradt H.S."/>
            <person name="Nimtz M."/>
            <person name="Dittmar K.E.J."/>
            <person name="Lindenmaier W."/>
            <person name="Hoppe J."/>
            <person name="Hauser H."/>
        </authorList>
    </citation>
    <scope>GLYCOSYLATION AT THR-23</scope>
</reference>
<reference key="17">
    <citation type="journal article" date="1992" name="EMBO J.">
        <title>A new gene, BCM, on chromosome 16 is fused to the interleukin 2 gene by a t(4;16)(q26;p13) translocation in a malignant T cell lymphoma.</title>
        <authorList>
            <person name="Laabi Y."/>
            <person name="Gras M.P."/>
            <person name="Carbonnel F."/>
            <person name="Brouet J.C."/>
            <person name="Berger R."/>
            <person name="Larsen C.-J."/>
            <person name="Tsapis A."/>
        </authorList>
    </citation>
    <scope>CHROMOSOMAL TRANSLOCATION WITH TNFRSF17</scope>
</reference>
<reference key="18">
    <citation type="journal article" date="1994" name="Science">
        <title>Functional activation of Jak1 and Jak3 by selective association with IL-2 receptor subunits.</title>
        <authorList>
            <person name="Miyazaki T."/>
            <person name="Kawahara A."/>
            <person name="Fujii H."/>
            <person name="Nakagawa Y."/>
            <person name="Minami Y."/>
            <person name="Liu Z.J."/>
            <person name="Oishi I."/>
            <person name="Silvennoinen O."/>
            <person name="Witthuhn B.A."/>
            <person name="Ihle J.N."/>
        </authorList>
    </citation>
    <scope>FUNCTION</scope>
</reference>
<reference key="19">
    <citation type="journal article" date="1995" name="Cytokine">
        <title>Activation of JAK3, but not JAK1, is critical for IL-2-induced proliferation and STAT5 recruitment by a COOH-terminal region of the IL-2 receptor beta-chain.</title>
        <authorList>
            <person name="Kirken R.A."/>
            <person name="Rui H."/>
            <person name="Malabarba M.G."/>
            <person name="Howard O.M."/>
            <person name="Kawamura M."/>
            <person name="O'Shea J.J."/>
            <person name="Farrar W.L."/>
        </authorList>
    </citation>
    <scope>FUNCTION</scope>
</reference>
<reference key="20">
    <citation type="journal article" date="2015" name="Proteomics">
        <title>Simultaneous dissection and comparison of IL-2 and IL-15 signaling pathways by global quantitative phosphoproteomics.</title>
        <authorList>
            <person name="Osinalde N."/>
            <person name="Sanchez-Quiles V."/>
            <person name="Akimov V."/>
            <person name="Guerra B."/>
            <person name="Blagoev B."/>
            <person name="Kratchmarova I."/>
        </authorList>
    </citation>
    <scope>FUNCTION</scope>
</reference>
<reference key="21">
    <citation type="journal article" date="1987" name="Science">
        <title>Three-dimensional structure of interleukin-2.</title>
        <authorList>
            <person name="Brandhuber B.J."/>
            <person name="Boone T."/>
            <person name="Kenney W.C."/>
            <person name="McKay D.B."/>
        </authorList>
    </citation>
    <scope>X-RAY CRYSTALLOGRAPHY (3.0 ANGSTROMS)</scope>
</reference>
<reference key="22">
    <citation type="journal article" date="1992" name="Science">
        <title>Unraveling the structure of IL-2.</title>
        <authorList>
            <person name="Bazan J.F."/>
        </authorList>
    </citation>
    <scope>COMPARISON OF X-RAY STRUCTURES</scope>
</reference>
<reference key="23">
    <citation type="journal article" date="1992" name="Science">
        <authorList>
            <person name="McKay D.B."/>
        </authorList>
    </citation>
    <scope>RESPONSE TO PUBMED:1631562</scope>
</reference>
<reference key="24">
    <citation type="journal article" date="1992" name="Biochemistry">
        <title>Secondary structure of human interleukin 2 from 3D heteronuclear NMR experiments.</title>
        <authorList>
            <person name="Mott H.R."/>
            <person name="Driscoll P.C."/>
            <person name="Boyd J."/>
            <person name="Cooke R.M."/>
            <person name="Weir M.P."/>
            <person name="Campbell I.D."/>
        </authorList>
    </citation>
    <scope>STRUCTURE BY NMR</scope>
</reference>
<reference key="25">
    <citation type="journal article" date="1994" name="Structure">
        <title>The interleukin-2 and interleukin-4 receptors studied by molecular modelling.</title>
        <authorList>
            <person name="Bamborough P."/>
            <person name="Hedgecock C.J."/>
            <person name="Richards W.G."/>
        </authorList>
    </citation>
    <scope>3D-STRUCTURE MODELING</scope>
</reference>
<reference key="26">
    <citation type="journal article" date="2005" name="Science">
        <title>Structure of the quaternary complex of interleukin-2 with its alpha, beta, and gammac receptors.</title>
        <authorList>
            <person name="Wang X."/>
            <person name="Rickert M."/>
            <person name="Garcia K.C."/>
        </authorList>
    </citation>
    <scope>X-RAY CRYSTALLOGRAPHY (2.3 ANGSTROMS) OF 21-153 IN COMPLEX WITH IL2RA; IL2RB AND IL2RG</scope>
    <scope>FUNCTION</scope>
</reference>
<reference key="27">
    <citation type="journal article" date="2006" name="Proc. Natl. Acad. Sci. U.S.A.">
        <title>Crystal structure of the IL-2 signaling complex: paradigm for a heterotrimeric cytokine receptor.</title>
        <authorList>
            <person name="Stauber D.J."/>
            <person name="Debler E.W."/>
            <person name="Horton P.A."/>
            <person name="Smith K.A."/>
            <person name="Wilson I.A."/>
        </authorList>
    </citation>
    <scope>X-RAY CRYSTALLOGRAPHY (3.0 ANGSTROMS) OF 21-153 IN COMPLEX WITH IL2RA; IL2RB AND IL2RG</scope>
    <scope>DISULFIDE BOND</scope>
    <scope>FUNCTION</scope>
</reference>
<name>IL2_HUMAN</name>
<protein>
    <recommendedName>
        <fullName>Interleukin-2</fullName>
        <shortName>IL-2</shortName>
    </recommendedName>
    <alternativeName>
        <fullName>T-cell growth factor</fullName>
        <shortName>TCGF</shortName>
    </alternativeName>
    <innName>Aldesleukin</innName>
</protein>
<sequence>MYRMQLLSCIALSLALVTNSAPTSSSTKKTQLQLEHLLLDLQMILNGINNYKNPKLTRMLTFKFYMPKKATELKHLQCLEEELKPLEEVLNLAQSKNFHLRPRDLISNINVIVLELKGSETTFMCEYADETATIVEFLNRWITFCQSIISTLT</sequence>
<organism>
    <name type="scientific">Homo sapiens</name>
    <name type="common">Human</name>
    <dbReference type="NCBI Taxonomy" id="9606"/>
    <lineage>
        <taxon>Eukaryota</taxon>
        <taxon>Metazoa</taxon>
        <taxon>Chordata</taxon>
        <taxon>Craniata</taxon>
        <taxon>Vertebrata</taxon>
        <taxon>Euteleostomi</taxon>
        <taxon>Mammalia</taxon>
        <taxon>Eutheria</taxon>
        <taxon>Euarchontoglires</taxon>
        <taxon>Primates</taxon>
        <taxon>Haplorrhini</taxon>
        <taxon>Catarrhini</taxon>
        <taxon>Hominidae</taxon>
        <taxon>Homo</taxon>
    </lineage>
</organism>
<comment type="function">
    <text evidence="2 3 4 7 8 9 10">Cytokine produced by activated CD4-positive helper T-cells and to a lesser extend activated CD8-positive T-cells and natural killer (NK) cells that plays pivotal roles in the immune response and tolerance (PubMed:6438535). Binds to a receptor complex composed of either the high-affinity trimeric IL-2R (IL2RA/CD25, IL2RB/CD122 and IL2RG/CD132) or the low-affinity dimeric IL-2R (IL2RB and IL2RG) (PubMed:16293754, PubMed:16477002). Interaction with the receptor leads to oligomerization and conformation changes in the IL-2R subunits resulting in downstream signaling starting with phosphorylation of JAK1 and JAK3 (PubMed:7973659). In turn, JAK1 and JAK3 phosphorylate the receptor to form a docking site leading to the phosphorylation of several substrates including STAT5 (PubMed:8580378). This process leads to activation of several pathways including STAT, phosphoinositide-3-kinase/PI3K and mitogen-activated protein kinase/MAPK pathways (PubMed:25142963). Functions as a T-cell growth factor and can increase NK-cell cytolytic activity as well (PubMed:6608729). Promotes strong proliferation of activated B-cells and subsequently immunoglobulin production (PubMed:6438535). Plays a pivotal role in regulating the adaptive immune system by controlling the survival and proliferation of regulatory T-cells, which are required for the maintenance of immune tolerance. Moreover, participates in the differentiation and homeostasis of effector T-cell subsets, including Th1, Th2, Th17 as well as memory CD8-positive T-cells.</text>
</comment>
<comment type="interaction">
    <interactant intactId="EBI-12508717">
        <id>P60568</id>
    </interactant>
    <interactant intactId="EBI-8614302">
        <id>P01589</id>
        <label>IL2RA</label>
    </interactant>
    <organismsDiffer>false</organismsDiffer>
    <experiments>3</experiments>
</comment>
<comment type="interaction">
    <interactant intactId="EBI-12508717">
        <id>P60568</id>
    </interactant>
    <interactant intactId="EBI-2866779">
        <id>P14784</id>
        <label>IL2RB</label>
    </interactant>
    <organismsDiffer>false</organismsDiffer>
    <experiments>5</experiments>
</comment>
<comment type="subcellular location">
    <subcellularLocation>
        <location>Secreted</location>
    </subcellularLocation>
</comment>
<comment type="disease">
    <text evidence="1">A chromosomal aberration involving IL2 is found in a form of T-cell acute lymphoblastic leukemia (T-ALL). Translocation t(4;16)(q26;p13) with involves TNFRSF17.</text>
</comment>
<comment type="pharmaceutical">
    <text>Available under the name Proleukin (Chiron). Used in patients with renal cell carcinoma or metastatic melanoma.</text>
</comment>
<comment type="similarity">
    <text evidence="11">Belongs to the IL-2 family.</text>
</comment>
<comment type="sequence caution" evidence="11">
    <conflict type="erroneous initiation">
        <sequence resource="EMBL-CDS" id="AAA59140"/>
    </conflict>
</comment>
<comment type="online information" name="Wikipedia">
    <link uri="https://en.wikipedia.org/wiki/Interleukin_2"/>
    <text>Interleukin-2 entry</text>
</comment>
<gene>
    <name type="primary">IL2</name>
</gene>
<proteinExistence type="evidence at protein level"/>
<keyword id="KW-0002">3D-structure</keyword>
<keyword id="KW-1064">Adaptive immunity</keyword>
<keyword id="KW-0160">Chromosomal rearrangement</keyword>
<keyword id="KW-0202">Cytokine</keyword>
<keyword id="KW-0903">Direct protein sequencing</keyword>
<keyword id="KW-1015">Disulfide bond</keyword>
<keyword id="KW-0325">Glycoprotein</keyword>
<keyword id="KW-0339">Growth factor</keyword>
<keyword id="KW-0391">Immunity</keyword>
<keyword id="KW-0582">Pharmaceutical</keyword>
<keyword id="KW-1267">Proteomics identification</keyword>
<keyword id="KW-0656">Proto-oncogene</keyword>
<keyword id="KW-1185">Reference proteome</keyword>
<keyword id="KW-0964">Secreted</keyword>
<keyword id="KW-0732">Signal</keyword>
<feature type="signal peptide" evidence="6">
    <location>
        <begin position="1"/>
        <end position="20"/>
    </location>
</feature>
<feature type="chain" id="PRO_0000015484" description="Interleukin-2">
    <location>
        <begin position="21"/>
        <end position="153"/>
    </location>
</feature>
<feature type="glycosylation site" id="CAR_000051" description="O-linked (GalNAc...) threonine" evidence="5 6">
    <location>
        <position position="23"/>
    </location>
</feature>
<feature type="disulfide bond" evidence="3 6">
    <location>
        <begin position="78"/>
        <end position="125"/>
    </location>
</feature>
<feature type="sequence variant" id="VAR_003967" description="In FT-IL2-A and FT-IL2-B.">
    <location>
        <position position="21"/>
    </location>
</feature>
<feature type="sequence variant" id="VAR_003968" description="In FT-IL2-B.">
    <location>
        <position position="22"/>
    </location>
</feature>
<feature type="helix" evidence="16">
    <location>
        <begin position="10"/>
        <end position="18"/>
    </location>
</feature>
<feature type="helix" evidence="20">
    <location>
        <begin position="27"/>
        <end position="48"/>
    </location>
</feature>
<feature type="strand" evidence="13">
    <location>
        <begin position="49"/>
        <end position="52"/>
    </location>
</feature>
<feature type="helix" evidence="20">
    <location>
        <begin position="56"/>
        <end position="59"/>
    </location>
</feature>
<feature type="helix" evidence="12">
    <location>
        <begin position="60"/>
        <end position="62"/>
    </location>
</feature>
<feature type="strand" evidence="19">
    <location>
        <begin position="64"/>
        <end position="68"/>
    </location>
</feature>
<feature type="helix" evidence="20">
    <location>
        <begin position="73"/>
        <end position="76"/>
    </location>
</feature>
<feature type="helix" evidence="20">
    <location>
        <begin position="77"/>
        <end position="81"/>
    </location>
</feature>
<feature type="helix" evidence="20">
    <location>
        <begin position="83"/>
        <end position="90"/>
    </location>
</feature>
<feature type="helix" evidence="17">
    <location>
        <begin position="91"/>
        <end position="93"/>
    </location>
</feature>
<feature type="helix" evidence="18">
    <location>
        <begin position="95"/>
        <end position="97"/>
    </location>
</feature>
<feature type="strand" evidence="14">
    <location>
        <begin position="98"/>
        <end position="100"/>
    </location>
</feature>
<feature type="helix" evidence="20">
    <location>
        <begin position="102"/>
        <end position="117"/>
    </location>
</feature>
<feature type="helix" evidence="15">
    <location>
        <begin position="120"/>
        <end position="122"/>
    </location>
</feature>
<feature type="strand" evidence="19">
    <location>
        <begin position="127"/>
        <end position="132"/>
    </location>
</feature>
<feature type="helix" evidence="20">
    <location>
        <begin position="134"/>
        <end position="151"/>
    </location>
</feature>
<dbReference type="EMBL" id="X00695">
    <property type="protein sequence ID" value="CAA25292.1"/>
    <property type="molecule type" value="Genomic_DNA"/>
</dbReference>
<dbReference type="EMBL" id="V00564">
    <property type="protein sequence ID" value="CAA23827.1"/>
    <property type="molecule type" value="mRNA"/>
</dbReference>
<dbReference type="EMBL" id="X01586">
    <property type="protein sequence ID" value="CAA25742.1"/>
    <property type="molecule type" value="mRNA"/>
</dbReference>
<dbReference type="EMBL" id="J00264">
    <property type="protein sequence ID" value="AAD48509.1"/>
    <property type="molecule type" value="Genomic_DNA"/>
</dbReference>
<dbReference type="EMBL" id="K02056">
    <property type="protein sequence ID" value="AAA98792.1"/>
    <property type="molecule type" value="Genomic_DNA"/>
</dbReference>
<dbReference type="EMBL" id="S77834">
    <property type="protein sequence ID" value="AAD14263.2"/>
    <property type="molecule type" value="mRNA"/>
</dbReference>
<dbReference type="EMBL" id="S82692">
    <property type="protein sequence ID" value="AAB46883.1"/>
    <property type="molecule type" value="mRNA"/>
</dbReference>
<dbReference type="EMBL" id="AF359939">
    <property type="protein sequence ID" value="AAK26665.1"/>
    <property type="molecule type" value="Genomic_DNA"/>
</dbReference>
<dbReference type="EMBL" id="BC066255">
    <property type="protein sequence ID" value="AAH66255.1"/>
    <property type="molecule type" value="mRNA"/>
</dbReference>
<dbReference type="EMBL" id="BC066257">
    <property type="protein sequence ID" value="AAH66257.1"/>
    <property type="molecule type" value="mRNA"/>
</dbReference>
<dbReference type="EMBL" id="BC070338">
    <property type="protein sequence ID" value="AAH70338.1"/>
    <property type="molecule type" value="mRNA"/>
</dbReference>
<dbReference type="EMBL" id="M33199">
    <property type="protein sequence ID" value="AAA59139.1"/>
    <property type="molecule type" value="Genomic_DNA"/>
</dbReference>
<dbReference type="EMBL" id="M13879">
    <property type="protein sequence ID" value="AAA59141.1"/>
    <property type="molecule type" value="Genomic_DNA"/>
</dbReference>
<dbReference type="EMBL" id="M22005">
    <property type="protein sequence ID" value="AAA59140.1"/>
    <property type="status" value="ALT_INIT"/>
    <property type="molecule type" value="Genomic_DNA"/>
</dbReference>
<dbReference type="CCDS" id="CCDS3726.1"/>
<dbReference type="PIR" id="A01849">
    <property type="entry name" value="ICHU2"/>
</dbReference>
<dbReference type="RefSeq" id="NP_000577.2">
    <property type="nucleotide sequence ID" value="NM_000586.3"/>
</dbReference>
<dbReference type="PDB" id="1IRL">
    <property type="method" value="NMR"/>
    <property type="chains" value="A=21-153"/>
</dbReference>
<dbReference type="PDB" id="1M47">
    <property type="method" value="X-ray"/>
    <property type="resolution" value="1.99 A"/>
    <property type="chains" value="A=21-153"/>
</dbReference>
<dbReference type="PDB" id="1M48">
    <property type="method" value="X-ray"/>
    <property type="resolution" value="1.95 A"/>
    <property type="chains" value="A/B=21-153"/>
</dbReference>
<dbReference type="PDB" id="1M49">
    <property type="method" value="X-ray"/>
    <property type="resolution" value="2.00 A"/>
    <property type="chains" value="A/B=21-153"/>
</dbReference>
<dbReference type="PDB" id="1M4A">
    <property type="method" value="X-ray"/>
    <property type="resolution" value="2.18 A"/>
    <property type="chains" value="A=21-153"/>
</dbReference>
<dbReference type="PDB" id="1M4B">
    <property type="method" value="X-ray"/>
    <property type="resolution" value="2.15 A"/>
    <property type="chains" value="A=21-153"/>
</dbReference>
<dbReference type="PDB" id="1M4C">
    <property type="method" value="X-ray"/>
    <property type="resolution" value="2.40 A"/>
    <property type="chains" value="A/B=21-153"/>
</dbReference>
<dbReference type="PDB" id="1NBP">
    <property type="method" value="X-ray"/>
    <property type="resolution" value="2.20 A"/>
    <property type="chains" value="A=21-153"/>
</dbReference>
<dbReference type="PDB" id="1PW6">
    <property type="method" value="X-ray"/>
    <property type="resolution" value="2.60 A"/>
    <property type="chains" value="A/B=21-153"/>
</dbReference>
<dbReference type="PDB" id="1PY2">
    <property type="method" value="X-ray"/>
    <property type="resolution" value="2.80 A"/>
    <property type="chains" value="A/B/C/D=21-152"/>
</dbReference>
<dbReference type="PDB" id="1QVN">
    <property type="method" value="X-ray"/>
    <property type="resolution" value="2.70 A"/>
    <property type="chains" value="A/B/C/D=21-152"/>
</dbReference>
<dbReference type="PDB" id="1Z92">
    <property type="method" value="X-ray"/>
    <property type="resolution" value="2.80 A"/>
    <property type="chains" value="A=21-153"/>
</dbReference>
<dbReference type="PDB" id="2B5I">
    <property type="method" value="X-ray"/>
    <property type="resolution" value="2.30 A"/>
    <property type="chains" value="A=21-153"/>
</dbReference>
<dbReference type="PDB" id="2ERJ">
    <property type="method" value="X-ray"/>
    <property type="resolution" value="3.00 A"/>
    <property type="chains" value="D/H=21-153"/>
</dbReference>
<dbReference type="PDB" id="3INK">
    <property type="method" value="X-ray"/>
    <property type="resolution" value="2.50 A"/>
    <property type="chains" value="C/D=21-153"/>
</dbReference>
<dbReference type="PDB" id="3QAZ">
    <property type="method" value="X-ray"/>
    <property type="resolution" value="3.80 A"/>
    <property type="chains" value="A/D/G/J/M/P/S/V/Y/b/e/h=21-153"/>
</dbReference>
<dbReference type="PDB" id="3QB1">
    <property type="method" value="X-ray"/>
    <property type="resolution" value="3.10 A"/>
    <property type="chains" value="A/B/C/D/E/F/G/H=21-153"/>
</dbReference>
<dbReference type="PDB" id="4NEJ">
    <property type="method" value="X-ray"/>
    <property type="resolution" value="1.92 A"/>
    <property type="chains" value="A=24-153"/>
</dbReference>
<dbReference type="PDB" id="4NEM">
    <property type="method" value="X-ray"/>
    <property type="resolution" value="1.93 A"/>
    <property type="chains" value="A=24-153"/>
</dbReference>
<dbReference type="PDB" id="5LQB">
    <property type="method" value="X-ray"/>
    <property type="resolution" value="1.95 A"/>
    <property type="chains" value="A=22-153"/>
</dbReference>
<dbReference type="PDB" id="5M5E">
    <property type="method" value="X-ray"/>
    <property type="resolution" value="2.30 A"/>
    <property type="chains" value="D=8-153"/>
</dbReference>
<dbReference type="PDB" id="5UTZ">
    <property type="method" value="X-ray"/>
    <property type="resolution" value="2.75 A"/>
    <property type="chains" value="A/D/E/I=21-153"/>
</dbReference>
<dbReference type="PDB" id="6LX3">
    <property type="method" value="EM"/>
    <property type="resolution" value="3.15 A"/>
    <property type="chains" value="A/B/C/D=1-21"/>
</dbReference>
<dbReference type="PDB" id="6LXW">
    <property type="method" value="EM"/>
    <property type="resolution" value="3.27 A"/>
    <property type="chains" value="A/B/C/D=1-21"/>
</dbReference>
<dbReference type="PDB" id="6VWU">
    <property type="method" value="X-ray"/>
    <property type="resolution" value="3.40 A"/>
    <property type="chains" value="A=10-21, A=90-94"/>
</dbReference>
<dbReference type="PDB" id="6YE3">
    <property type="method" value="X-ray"/>
    <property type="resolution" value="2.89 A"/>
    <property type="chains" value="C/F/I=21-153"/>
</dbReference>
<dbReference type="PDB" id="7DR4">
    <property type="method" value="X-ray"/>
    <property type="resolution" value="2.49 A"/>
    <property type="chains" value="G/I/J/K=21-153"/>
</dbReference>
<dbReference type="PDB" id="7M2G">
    <property type="method" value="X-ray"/>
    <property type="resolution" value="1.79 A"/>
    <property type="chains" value="A=21-153"/>
</dbReference>
<dbReference type="PDB" id="7RA9">
    <property type="method" value="X-ray"/>
    <property type="resolution" value="2.20 A"/>
    <property type="chains" value="A=21-153"/>
</dbReference>
<dbReference type="PDB" id="7RAA">
    <property type="method" value="X-ray"/>
    <property type="resolution" value="2.69 A"/>
    <property type="chains" value="A/B/C/D=21-153"/>
</dbReference>
<dbReference type="PDB" id="7YZJ">
    <property type="method" value="X-ray"/>
    <property type="resolution" value="2.60 A"/>
    <property type="chains" value="E=84-92"/>
</dbReference>
<dbReference type="PDB" id="7ZMZ">
    <property type="method" value="X-ray"/>
    <property type="resolution" value="3.20 A"/>
    <property type="chains" value="A=20-153"/>
</dbReference>
<dbReference type="PDB" id="8SOW">
    <property type="method" value="X-ray"/>
    <property type="resolution" value="1.71 A"/>
    <property type="chains" value="A=20-153"/>
</dbReference>
<dbReference type="PDB" id="8SOZ">
    <property type="method" value="X-ray"/>
    <property type="resolution" value="1.64 A"/>
    <property type="chains" value="A=20-153"/>
</dbReference>
<dbReference type="PDB" id="8WYR">
    <property type="method" value="EM"/>
    <property type="resolution" value="3.39 A"/>
    <property type="chains" value="A/B/C/D/E/F/G/H/K/L/M=1-21"/>
</dbReference>
<dbReference type="PDB" id="8WYS">
    <property type="method" value="EM"/>
    <property type="resolution" value="3.41 A"/>
    <property type="chains" value="A/L/M=1-21"/>
</dbReference>
<dbReference type="PDBsum" id="1IRL"/>
<dbReference type="PDBsum" id="1M47"/>
<dbReference type="PDBsum" id="1M48"/>
<dbReference type="PDBsum" id="1M49"/>
<dbReference type="PDBsum" id="1M4A"/>
<dbReference type="PDBsum" id="1M4B"/>
<dbReference type="PDBsum" id="1M4C"/>
<dbReference type="PDBsum" id="1NBP"/>
<dbReference type="PDBsum" id="1PW6"/>
<dbReference type="PDBsum" id="1PY2"/>
<dbReference type="PDBsum" id="1QVN"/>
<dbReference type="PDBsum" id="1Z92"/>
<dbReference type="PDBsum" id="2B5I"/>
<dbReference type="PDBsum" id="2ERJ"/>
<dbReference type="PDBsum" id="3INK"/>
<dbReference type="PDBsum" id="3QAZ"/>
<dbReference type="PDBsum" id="3QB1"/>
<dbReference type="PDBsum" id="4NEJ"/>
<dbReference type="PDBsum" id="4NEM"/>
<dbReference type="PDBsum" id="5LQB"/>
<dbReference type="PDBsum" id="5M5E"/>
<dbReference type="PDBsum" id="5UTZ"/>
<dbReference type="PDBsum" id="6LX3"/>
<dbReference type="PDBsum" id="6LXW"/>
<dbReference type="PDBsum" id="6VWU"/>
<dbReference type="PDBsum" id="6YE3"/>
<dbReference type="PDBsum" id="7DR4"/>
<dbReference type="PDBsum" id="7M2G"/>
<dbReference type="PDBsum" id="7RA9"/>
<dbReference type="PDBsum" id="7RAA"/>
<dbReference type="PDBsum" id="7YZJ"/>
<dbReference type="PDBsum" id="7ZMZ"/>
<dbReference type="PDBsum" id="8SOW"/>
<dbReference type="PDBsum" id="8SOZ"/>
<dbReference type="PDBsum" id="8WYR"/>
<dbReference type="PDBsum" id="8WYS"/>
<dbReference type="SMR" id="P60568"/>
<dbReference type="BioGRID" id="109773">
    <property type="interactions" value="5"/>
</dbReference>
<dbReference type="ComplexPortal" id="CPX-646">
    <property type="entry name" value="Interleukin-2 receptor-ligand complex"/>
</dbReference>
<dbReference type="CORUM" id="P60568"/>
<dbReference type="DIP" id="DIP-475N"/>
<dbReference type="FunCoup" id="P60568">
    <property type="interactions" value="901"/>
</dbReference>
<dbReference type="IntAct" id="P60568">
    <property type="interactions" value="4"/>
</dbReference>
<dbReference type="STRING" id="9606.ENSP00000226730"/>
<dbReference type="BindingDB" id="P60568"/>
<dbReference type="ChEMBL" id="CHEMBL5880"/>
<dbReference type="DrugBank" id="DB03455">
    <property type="generic name" value="(1H-indol-3-yl)-(2-mercapto-ethoxyimino)-acetic acid"/>
</dbReference>
<dbReference type="DrugBank" id="DB04278">
    <property type="generic name" value="2-[2-(2-Cyclohexyl-2-guanidino-acetylamino)-acetylamino]-N-(3-mercapto-propyl)-propionamide"/>
</dbReference>
<dbReference type="DrugBank" id="DB03372">
    <property type="generic name" value="3-Mercapto-1-(1,3,4,9-Tetrahydro-B-Carbolin-2-Yl)-Propan-1-One"/>
</dbReference>
<dbReference type="DrugBank" id="DB01327">
    <property type="generic name" value="Cefazolin"/>
</dbReference>
<dbReference type="DrugBank" id="DB05304">
    <property type="generic name" value="Girentuximab"/>
</dbReference>
<dbReference type="DrugBank" id="DB05299">
    <property type="generic name" value="Keyhole limpet hemocyanin"/>
</dbReference>
<dbReference type="DrugBank" id="DB03453">
    <property type="generic name" value="Methyl (2S)-2-[[2-[(3R)-1-carbamimidoylpiperidin-3-yl]acetyl]amino]-3-[4-(2-phenylethynyl)phenyl]propanoate"/>
</dbReference>
<dbReference type="DrugBank" id="DB02581">
    <property type="generic name" value="N(2)-carbamimidoyl-N-{2-[4-(3-{4-[(5-carboxyfuran-2-yl)methoxy]-2,3-dichlorophenyl}-1-methyl-1H-pyrazol-5-yl)piperidin-1-yl]-2-oxoethyl}-D-leucinamide"/>
</dbReference>
<dbReference type="DrugBank" id="DB00852">
    <property type="generic name" value="Pseudoephedrine"/>
</dbReference>
<dbReference type="DrugBank" id="DB11366">
    <property type="generic name" value="Roquinimex"/>
</dbReference>
<dbReference type="DrugBank" id="DB03957">
    <property type="generic name" value="SP2456"/>
</dbReference>
<dbReference type="DrugBank" id="DB02555">
    <property type="generic name" value="SP4160"/>
</dbReference>
<dbReference type="DrugBank" id="DB06584">
    <property type="generic name" value="TG4010"/>
</dbReference>
<dbReference type="DrugCentral" id="P60568"/>
<dbReference type="GlyConnect" id="225">
    <property type="glycosylation" value="6 N-Linked glycans, 2 O-Linked glycans"/>
</dbReference>
<dbReference type="GlyConnect" id="297">
    <property type="glycosylation" value="3 O-Linked glycans (1 site)"/>
</dbReference>
<dbReference type="GlyConnect" id="298">
    <property type="glycosylation" value="2 O-Linked glycans"/>
</dbReference>
<dbReference type="GlyConnect" id="299">
    <property type="glycosylation" value="2 O-Linked glycans"/>
</dbReference>
<dbReference type="GlyConnect" id="300">
    <property type="glycosylation" value="2 N-Linked glycans"/>
</dbReference>
<dbReference type="GlyCosmos" id="P60568">
    <property type="glycosylation" value="1 site, 24 glycans"/>
</dbReference>
<dbReference type="GlyGen" id="P60568">
    <property type="glycosylation" value="3 sites, 11 N-linked glycans (1 site), 9 O-linked glycans (2 sites)"/>
</dbReference>
<dbReference type="iPTMnet" id="P60568"/>
<dbReference type="MetOSite" id="P60568"/>
<dbReference type="PhosphoSitePlus" id="P60568"/>
<dbReference type="BioMuta" id="IL2"/>
<dbReference type="DMDM" id="45593462"/>
<dbReference type="jPOST" id="P60568"/>
<dbReference type="MassIVE" id="P60568"/>
<dbReference type="PaxDb" id="9606-ENSP00000226730"/>
<dbReference type="PeptideAtlas" id="P60568"/>
<dbReference type="ProteomicsDB" id="57215"/>
<dbReference type="ABCD" id="P60568">
    <property type="antibodies" value="6 sequenced antibodies"/>
</dbReference>
<dbReference type="Antibodypedia" id="4147">
    <property type="antibodies" value="2286 antibodies from 49 providers"/>
</dbReference>
<dbReference type="DNASU" id="3558"/>
<dbReference type="Ensembl" id="ENST00000226730.5">
    <property type="protein sequence ID" value="ENSP00000226730.5"/>
    <property type="gene ID" value="ENSG00000109471.5"/>
</dbReference>
<dbReference type="GeneID" id="3558"/>
<dbReference type="KEGG" id="hsa:3558"/>
<dbReference type="MANE-Select" id="ENST00000226730.5">
    <property type="protein sequence ID" value="ENSP00000226730.5"/>
    <property type="RefSeq nucleotide sequence ID" value="NM_000586.4"/>
    <property type="RefSeq protein sequence ID" value="NP_000577.2"/>
</dbReference>
<dbReference type="AGR" id="HGNC:6001"/>
<dbReference type="CTD" id="3558"/>
<dbReference type="DisGeNET" id="3558"/>
<dbReference type="GeneCards" id="IL2"/>
<dbReference type="HGNC" id="HGNC:6001">
    <property type="gene designation" value="IL2"/>
</dbReference>
<dbReference type="HPA" id="ENSG00000109471">
    <property type="expression patterns" value="Not detected"/>
</dbReference>
<dbReference type="MalaCards" id="IL2"/>
<dbReference type="MIM" id="147680">
    <property type="type" value="gene"/>
</dbReference>
<dbReference type="neXtProt" id="NX_P60568"/>
<dbReference type="OpenTargets" id="ENSG00000109471"/>
<dbReference type="PharmGKB" id="PA195"/>
<dbReference type="VEuPathDB" id="HostDB:ENSG00000109471"/>
<dbReference type="eggNOG" id="ENOG502RVR5">
    <property type="taxonomic scope" value="Eukaryota"/>
</dbReference>
<dbReference type="GeneTree" id="ENSGT00390000003555"/>
<dbReference type="HOGENOM" id="CLU_124210_0_0_1"/>
<dbReference type="InParanoid" id="P60568"/>
<dbReference type="OMA" id="NGVNNYE"/>
<dbReference type="OrthoDB" id="9450228at2759"/>
<dbReference type="PAN-GO" id="P60568">
    <property type="GO annotations" value="2 GO annotations based on evolutionary models"/>
</dbReference>
<dbReference type="PhylomeDB" id="P60568"/>
<dbReference type="TreeFam" id="TF338200"/>
<dbReference type="PathwayCommons" id="P60568"/>
<dbReference type="Reactome" id="R-HSA-5673001">
    <property type="pathway name" value="RAF/MAP kinase cascade"/>
</dbReference>
<dbReference type="Reactome" id="R-HSA-8877330">
    <property type="pathway name" value="RUNX1 and FOXP3 control the development of regulatory T lymphocytes (Tregs)"/>
</dbReference>
<dbReference type="Reactome" id="R-HSA-9020558">
    <property type="pathway name" value="Interleukin-2 signaling"/>
</dbReference>
<dbReference type="Reactome" id="R-HSA-912526">
    <property type="pathway name" value="Interleukin receptor SHC signaling"/>
</dbReference>
<dbReference type="SignaLink" id="P60568"/>
<dbReference type="SIGNOR" id="P60568"/>
<dbReference type="BioGRID-ORCS" id="3558">
    <property type="hits" value="11 hits in 1136 CRISPR screens"/>
</dbReference>
<dbReference type="ChiTaRS" id="IL2">
    <property type="organism name" value="human"/>
</dbReference>
<dbReference type="EvolutionaryTrace" id="P60568"/>
<dbReference type="GeneWiki" id="Interleukin_2"/>
<dbReference type="GenomeRNAi" id="3558"/>
<dbReference type="Pharos" id="P60568">
    <property type="development level" value="Tchem"/>
</dbReference>
<dbReference type="PRO" id="PR:P60568"/>
<dbReference type="Proteomes" id="UP000005640">
    <property type="component" value="Chromosome 4"/>
</dbReference>
<dbReference type="RNAct" id="P60568">
    <property type="molecule type" value="protein"/>
</dbReference>
<dbReference type="Bgee" id="ENSG00000109471">
    <property type="expression patterns" value="Expressed in primordial germ cell in gonad and 78 other cell types or tissues"/>
</dbReference>
<dbReference type="ExpressionAtlas" id="P60568">
    <property type="expression patterns" value="baseline and differential"/>
</dbReference>
<dbReference type="GO" id="GO:0005576">
    <property type="term" value="C:extracellular region"/>
    <property type="evidence" value="ECO:0000304"/>
    <property type="project" value="Reactome"/>
</dbReference>
<dbReference type="GO" id="GO:0005615">
    <property type="term" value="C:extracellular space"/>
    <property type="evidence" value="ECO:0000314"/>
    <property type="project" value="UniProt"/>
</dbReference>
<dbReference type="GO" id="GO:0030246">
    <property type="term" value="F:carbohydrate binding"/>
    <property type="evidence" value="ECO:0007669"/>
    <property type="project" value="Ensembl"/>
</dbReference>
<dbReference type="GO" id="GO:0005125">
    <property type="term" value="F:cytokine activity"/>
    <property type="evidence" value="ECO:0000314"/>
    <property type="project" value="MGI"/>
</dbReference>
<dbReference type="GO" id="GO:0043208">
    <property type="term" value="F:glycosphingolipid binding"/>
    <property type="evidence" value="ECO:0007669"/>
    <property type="project" value="Ensembl"/>
</dbReference>
<dbReference type="GO" id="GO:0008083">
    <property type="term" value="F:growth factor activity"/>
    <property type="evidence" value="ECO:0000304"/>
    <property type="project" value="UniProtKB"/>
</dbReference>
<dbReference type="GO" id="GO:0005134">
    <property type="term" value="F:interleukin-2 receptor binding"/>
    <property type="evidence" value="ECO:0000314"/>
    <property type="project" value="MGI"/>
</dbReference>
<dbReference type="GO" id="GO:0031851">
    <property type="term" value="F:kappa-type opioid receptor binding"/>
    <property type="evidence" value="ECO:0007669"/>
    <property type="project" value="Ensembl"/>
</dbReference>
<dbReference type="GO" id="GO:0019209">
    <property type="term" value="F:kinase activator activity"/>
    <property type="evidence" value="ECO:0000304"/>
    <property type="project" value="UniProtKB"/>
</dbReference>
<dbReference type="GO" id="GO:0050798">
    <property type="term" value="P:activated T cell proliferation"/>
    <property type="evidence" value="ECO:0007669"/>
    <property type="project" value="Ensembl"/>
</dbReference>
<dbReference type="GO" id="GO:0002250">
    <property type="term" value="P:adaptive immune response"/>
    <property type="evidence" value="ECO:0007669"/>
    <property type="project" value="UniProtKB-KW"/>
</dbReference>
<dbReference type="GO" id="GO:0007155">
    <property type="term" value="P:cell adhesion"/>
    <property type="evidence" value="ECO:0000304"/>
    <property type="project" value="UniProtKB"/>
</dbReference>
<dbReference type="GO" id="GO:0097696">
    <property type="term" value="P:cell surface receptor signaling pathway via STAT"/>
    <property type="evidence" value="ECO:0000314"/>
    <property type="project" value="BHF-UCL"/>
</dbReference>
<dbReference type="GO" id="GO:0007267">
    <property type="term" value="P:cell-cell signaling"/>
    <property type="evidence" value="ECO:0000304"/>
    <property type="project" value="UniProtKB"/>
</dbReference>
<dbReference type="GO" id="GO:0097192">
    <property type="term" value="P:extrinsic apoptotic signaling pathway in absence of ligand"/>
    <property type="evidence" value="ECO:0007669"/>
    <property type="project" value="Ensembl"/>
</dbReference>
<dbReference type="GO" id="GO:0006955">
    <property type="term" value="P:immune response"/>
    <property type="evidence" value="ECO:0000304"/>
    <property type="project" value="UniProtKB"/>
</dbReference>
<dbReference type="GO" id="GO:0038110">
    <property type="term" value="P:interleukin-2-mediated signaling pathway"/>
    <property type="evidence" value="ECO:0000314"/>
    <property type="project" value="UniProt"/>
</dbReference>
<dbReference type="GO" id="GO:0002366">
    <property type="term" value="P:leukocyte activation involved in immune response"/>
    <property type="evidence" value="ECO:0000314"/>
    <property type="project" value="UniProtKB"/>
</dbReference>
<dbReference type="GO" id="GO:0030101">
    <property type="term" value="P:natural killer cell activation"/>
    <property type="evidence" value="ECO:0000304"/>
    <property type="project" value="UniProtKB"/>
</dbReference>
<dbReference type="GO" id="GO:0043066">
    <property type="term" value="P:negative regulation of apoptotic process"/>
    <property type="evidence" value="ECO:0000304"/>
    <property type="project" value="UniProtKB"/>
</dbReference>
<dbReference type="GO" id="GO:0002903">
    <property type="term" value="P:negative regulation of B cell apoptotic process"/>
    <property type="evidence" value="ECO:0000314"/>
    <property type="project" value="MGI"/>
</dbReference>
<dbReference type="GO" id="GO:0050728">
    <property type="term" value="P:negative regulation of inflammatory response"/>
    <property type="evidence" value="ECO:0007669"/>
    <property type="project" value="Ensembl"/>
</dbReference>
<dbReference type="GO" id="GO:0050672">
    <property type="term" value="P:negative regulation of lymphocyte proliferation"/>
    <property type="evidence" value="ECO:0007669"/>
    <property type="project" value="Ensembl"/>
</dbReference>
<dbReference type="GO" id="GO:2000320">
    <property type="term" value="P:negative regulation of T-helper 17 cell differentiation"/>
    <property type="evidence" value="ECO:0007669"/>
    <property type="project" value="Ensembl"/>
</dbReference>
<dbReference type="GO" id="GO:0007200">
    <property type="term" value="P:phospholipase C-activating G protein-coupled receptor signaling pathway"/>
    <property type="evidence" value="ECO:0007669"/>
    <property type="project" value="Ensembl"/>
</dbReference>
<dbReference type="GO" id="GO:0042104">
    <property type="term" value="P:positive regulation of activated T cell proliferation"/>
    <property type="evidence" value="ECO:0000314"/>
    <property type="project" value="MGI"/>
</dbReference>
<dbReference type="GO" id="GO:0030890">
    <property type="term" value="P:positive regulation of B cell proliferation"/>
    <property type="evidence" value="ECO:0000314"/>
    <property type="project" value="MGI"/>
</dbReference>
<dbReference type="GO" id="GO:0030307">
    <property type="term" value="P:positive regulation of cell growth"/>
    <property type="evidence" value="ECO:0000304"/>
    <property type="project" value="UniProtKB"/>
</dbReference>
<dbReference type="GO" id="GO:0008284">
    <property type="term" value="P:positive regulation of cell population proliferation"/>
    <property type="evidence" value="ECO:0000304"/>
    <property type="project" value="UniProtKB"/>
</dbReference>
<dbReference type="GO" id="GO:0007204">
    <property type="term" value="P:positive regulation of cytosolic calcium ion concentration"/>
    <property type="evidence" value="ECO:0007669"/>
    <property type="project" value="Ensembl"/>
</dbReference>
<dbReference type="GO" id="GO:0060999">
    <property type="term" value="P:positive regulation of dendritic spine development"/>
    <property type="evidence" value="ECO:0007669"/>
    <property type="project" value="Ensembl"/>
</dbReference>
<dbReference type="GO" id="GO:0002639">
    <property type="term" value="P:positive regulation of immunoglobulin production"/>
    <property type="evidence" value="ECO:0000316"/>
    <property type="project" value="ARUK-UCL"/>
</dbReference>
<dbReference type="GO" id="GO:0050729">
    <property type="term" value="P:positive regulation of inflammatory response"/>
    <property type="evidence" value="ECO:0000305"/>
    <property type="project" value="BHF-UCL"/>
</dbReference>
<dbReference type="GO" id="GO:0032740">
    <property type="term" value="P:positive regulation of interleukin-17 production"/>
    <property type="evidence" value="ECO:0000314"/>
    <property type="project" value="BHF-UCL"/>
</dbReference>
<dbReference type="GO" id="GO:0048304">
    <property type="term" value="P:positive regulation of isotype switching to IgG isotypes"/>
    <property type="evidence" value="ECO:0007669"/>
    <property type="project" value="Ensembl"/>
</dbReference>
<dbReference type="GO" id="GO:1900100">
    <property type="term" value="P:positive regulation of plasma cell differentiation"/>
    <property type="evidence" value="ECO:0000316"/>
    <property type="project" value="ARUK-UCL"/>
</dbReference>
<dbReference type="GO" id="GO:0045591">
    <property type="term" value="P:positive regulation of regulatory T cell differentiation"/>
    <property type="evidence" value="ECO:0007669"/>
    <property type="project" value="Ensembl"/>
</dbReference>
<dbReference type="GO" id="GO:0034105">
    <property type="term" value="P:positive regulation of tissue remodeling"/>
    <property type="evidence" value="ECO:0000305"/>
    <property type="project" value="BHF-UCL"/>
</dbReference>
<dbReference type="GO" id="GO:0045944">
    <property type="term" value="P:positive regulation of transcription by RNA polymerase II"/>
    <property type="evidence" value="ECO:0007669"/>
    <property type="project" value="Ensembl"/>
</dbReference>
<dbReference type="GO" id="GO:0032729">
    <property type="term" value="P:positive regulation of type II interferon production"/>
    <property type="evidence" value="ECO:0007669"/>
    <property type="project" value="Ensembl"/>
</dbReference>
<dbReference type="GO" id="GO:2000561">
    <property type="term" value="P:regulation of CD4-positive, alpha-beta T cell proliferation"/>
    <property type="evidence" value="ECO:0007669"/>
    <property type="project" value="Ensembl"/>
</dbReference>
<dbReference type="GO" id="GO:0046013">
    <property type="term" value="P:regulation of T cell homeostatic proliferation"/>
    <property type="evidence" value="ECO:0007669"/>
    <property type="project" value="Ensembl"/>
</dbReference>
<dbReference type="GO" id="GO:0045471">
    <property type="term" value="P:response to ethanol"/>
    <property type="evidence" value="ECO:0007669"/>
    <property type="project" value="Ensembl"/>
</dbReference>
<dbReference type="GO" id="GO:1901327">
    <property type="term" value="P:response to tacrolimus"/>
    <property type="evidence" value="ECO:0007669"/>
    <property type="project" value="Ensembl"/>
</dbReference>
<dbReference type="GO" id="GO:0030217">
    <property type="term" value="P:T cell differentiation"/>
    <property type="evidence" value="ECO:0000304"/>
    <property type="project" value="UniProtKB"/>
</dbReference>
<dbReference type="GO" id="GO:0006366">
    <property type="term" value="P:transcription by RNA polymerase II"/>
    <property type="evidence" value="ECO:0007669"/>
    <property type="project" value="Ensembl"/>
</dbReference>
<dbReference type="FunFam" id="1.20.1250.10:FF:000025">
    <property type="entry name" value="Interleukin-2"/>
    <property type="match status" value="1"/>
</dbReference>
<dbReference type="Gene3D" id="1.20.1250.10">
    <property type="match status" value="1"/>
</dbReference>
<dbReference type="InterPro" id="IPR009079">
    <property type="entry name" value="4_helix_cytokine-like_core"/>
</dbReference>
<dbReference type="InterPro" id="IPR000779">
    <property type="entry name" value="IL-2"/>
</dbReference>
<dbReference type="InterPro" id="IPR030477">
    <property type="entry name" value="IL-2_CS"/>
</dbReference>
<dbReference type="PANTHER" id="PTHR48487">
    <property type="entry name" value="INTERLEUKIN-2"/>
    <property type="match status" value="1"/>
</dbReference>
<dbReference type="PANTHER" id="PTHR48487:SF1">
    <property type="entry name" value="INTERLEUKIN-2"/>
    <property type="match status" value="1"/>
</dbReference>
<dbReference type="Pfam" id="PF00715">
    <property type="entry name" value="IL2"/>
    <property type="match status" value="1"/>
</dbReference>
<dbReference type="PRINTS" id="PR00265">
    <property type="entry name" value="INTERLEUKIN2"/>
</dbReference>
<dbReference type="SMART" id="SM00189">
    <property type="entry name" value="IL2"/>
    <property type="match status" value="1"/>
</dbReference>
<dbReference type="SUPFAM" id="SSF47266">
    <property type="entry name" value="4-helical cytokines"/>
    <property type="match status" value="1"/>
</dbReference>
<dbReference type="PROSITE" id="PS00424">
    <property type="entry name" value="INTERLEUKIN_2"/>
    <property type="match status" value="1"/>
</dbReference>
<accession>P60568</accession>
<accession>P01585</accession>
<evidence type="ECO:0000269" key="1">
    <source>
    </source>
</evidence>
<evidence type="ECO:0000269" key="2">
    <source>
    </source>
</evidence>
<evidence type="ECO:0000269" key="3">
    <source>
    </source>
</evidence>
<evidence type="ECO:0000269" key="4">
    <source>
    </source>
</evidence>
<evidence type="ECO:0000269" key="5">
    <source>
    </source>
</evidence>
<evidence type="ECO:0000269" key="6">
    <source>
    </source>
</evidence>
<evidence type="ECO:0000269" key="7">
    <source>
    </source>
</evidence>
<evidence type="ECO:0000269" key="8">
    <source>
    </source>
</evidence>
<evidence type="ECO:0000269" key="9">
    <source>
    </source>
</evidence>
<evidence type="ECO:0000269" key="10">
    <source>
    </source>
</evidence>
<evidence type="ECO:0000305" key="11"/>
<evidence type="ECO:0007829" key="12">
    <source>
        <dbReference type="PDB" id="1IRL"/>
    </source>
</evidence>
<evidence type="ECO:0007829" key="13">
    <source>
        <dbReference type="PDB" id="2B5I"/>
    </source>
</evidence>
<evidence type="ECO:0007829" key="14">
    <source>
        <dbReference type="PDB" id="3INK"/>
    </source>
</evidence>
<evidence type="ECO:0007829" key="15">
    <source>
        <dbReference type="PDB" id="5LQB"/>
    </source>
</evidence>
<evidence type="ECO:0007829" key="16">
    <source>
        <dbReference type="PDB" id="6VWU"/>
    </source>
</evidence>
<evidence type="ECO:0007829" key="17">
    <source>
        <dbReference type="PDB" id="6YE3"/>
    </source>
</evidence>
<evidence type="ECO:0007829" key="18">
    <source>
        <dbReference type="PDB" id="7M2G"/>
    </source>
</evidence>
<evidence type="ECO:0007829" key="19">
    <source>
        <dbReference type="PDB" id="7RA9"/>
    </source>
</evidence>
<evidence type="ECO:0007829" key="20">
    <source>
        <dbReference type="PDB" id="8SOZ"/>
    </source>
</evidence>